<reference key="1">
    <citation type="journal article" date="2005" name="DNA Res.">
        <title>Complete genome sequence of the facultative anaerobic magnetotactic bacterium Magnetospirillum sp. strain AMB-1.</title>
        <authorList>
            <person name="Matsunaga T."/>
            <person name="Okamura Y."/>
            <person name="Fukuda Y."/>
            <person name="Wahyudi A.T."/>
            <person name="Murase Y."/>
            <person name="Takeyama H."/>
        </authorList>
    </citation>
    <scope>NUCLEOTIDE SEQUENCE [LARGE SCALE GENOMIC DNA]</scope>
    <source>
        <strain>ATCC 700264 / AMB-1</strain>
    </source>
</reference>
<sequence length="321" mass="33453">MSQMVLVADIGGTHARFALMGPDGEAVNPVVLRCADYDGPAPAIKAYLAEHAGGVAPKGGAFAVASVIDGDRIELTNSPWRFSIAETRQAVGLQRLEVVNDFTAVALSVRHLKPEHLMSVGGGMPEAGLPIAVLGPGTGLGVSALIPSASGEWTALATEGGHVTMAAATEREARILDRLRTQFDHVSAERVLSGQGLVNLYQAVAALSGHQAVFSTPDVITKRGLDGSCPVSREAVEVFFAMMGTVAGNLALSLGAKGGVFIAGGILPRMAEAFRLSSFRTRFEAHGRFQPYLAAIPTWLITHPLPAFVGLAGLVTDPKNA</sequence>
<comment type="catalytic activity">
    <reaction evidence="1">
        <text>D-glucose + ATP = D-glucose 6-phosphate + ADP + H(+)</text>
        <dbReference type="Rhea" id="RHEA:17825"/>
        <dbReference type="ChEBI" id="CHEBI:4167"/>
        <dbReference type="ChEBI" id="CHEBI:15378"/>
        <dbReference type="ChEBI" id="CHEBI:30616"/>
        <dbReference type="ChEBI" id="CHEBI:61548"/>
        <dbReference type="ChEBI" id="CHEBI:456216"/>
        <dbReference type="EC" id="2.7.1.2"/>
    </reaction>
</comment>
<comment type="subcellular location">
    <subcellularLocation>
        <location evidence="1">Cytoplasm</location>
    </subcellularLocation>
</comment>
<comment type="similarity">
    <text evidence="1">Belongs to the bacterial glucokinase family.</text>
</comment>
<keyword id="KW-0067">ATP-binding</keyword>
<keyword id="KW-0963">Cytoplasm</keyword>
<keyword id="KW-0324">Glycolysis</keyword>
<keyword id="KW-0418">Kinase</keyword>
<keyword id="KW-0547">Nucleotide-binding</keyword>
<keyword id="KW-0808">Transferase</keyword>
<organism>
    <name type="scientific">Paramagnetospirillum magneticum (strain ATCC 700264 / AMB-1)</name>
    <name type="common">Magnetospirillum magneticum</name>
    <dbReference type="NCBI Taxonomy" id="342108"/>
    <lineage>
        <taxon>Bacteria</taxon>
        <taxon>Pseudomonadati</taxon>
        <taxon>Pseudomonadota</taxon>
        <taxon>Alphaproteobacteria</taxon>
        <taxon>Rhodospirillales</taxon>
        <taxon>Magnetospirillaceae</taxon>
        <taxon>Paramagnetospirillum</taxon>
    </lineage>
</organism>
<protein>
    <recommendedName>
        <fullName evidence="1">Glucokinase</fullName>
        <ecNumber evidence="1">2.7.1.2</ecNumber>
    </recommendedName>
    <alternativeName>
        <fullName evidence="1">Glucose kinase</fullName>
    </alternativeName>
</protein>
<name>GLK_PARM1</name>
<proteinExistence type="inferred from homology"/>
<dbReference type="EC" id="2.7.1.2" evidence="1"/>
<dbReference type="EMBL" id="AP007255">
    <property type="protein sequence ID" value="BAE50916.1"/>
    <property type="molecule type" value="Genomic_DNA"/>
</dbReference>
<dbReference type="RefSeq" id="WP_011384511.1">
    <property type="nucleotide sequence ID" value="NC_007626.1"/>
</dbReference>
<dbReference type="SMR" id="Q2W5F9"/>
<dbReference type="STRING" id="342108.amb2112"/>
<dbReference type="KEGG" id="mag:amb2112"/>
<dbReference type="HOGENOM" id="CLU_042582_1_0_5"/>
<dbReference type="OrthoDB" id="9800595at2"/>
<dbReference type="Proteomes" id="UP000007058">
    <property type="component" value="Chromosome"/>
</dbReference>
<dbReference type="GO" id="GO:0005829">
    <property type="term" value="C:cytosol"/>
    <property type="evidence" value="ECO:0007669"/>
    <property type="project" value="TreeGrafter"/>
</dbReference>
<dbReference type="GO" id="GO:0005524">
    <property type="term" value="F:ATP binding"/>
    <property type="evidence" value="ECO:0007669"/>
    <property type="project" value="UniProtKB-UniRule"/>
</dbReference>
<dbReference type="GO" id="GO:0005536">
    <property type="term" value="F:D-glucose binding"/>
    <property type="evidence" value="ECO:0007669"/>
    <property type="project" value="InterPro"/>
</dbReference>
<dbReference type="GO" id="GO:0004340">
    <property type="term" value="F:glucokinase activity"/>
    <property type="evidence" value="ECO:0007669"/>
    <property type="project" value="UniProtKB-UniRule"/>
</dbReference>
<dbReference type="GO" id="GO:0006096">
    <property type="term" value="P:glycolytic process"/>
    <property type="evidence" value="ECO:0007669"/>
    <property type="project" value="UniProtKB-UniRule"/>
</dbReference>
<dbReference type="CDD" id="cd24008">
    <property type="entry name" value="ASKHA_NBD_GLK"/>
    <property type="match status" value="1"/>
</dbReference>
<dbReference type="FunFam" id="3.40.367.20:FF:000002">
    <property type="entry name" value="Glucokinase"/>
    <property type="match status" value="1"/>
</dbReference>
<dbReference type="Gene3D" id="3.30.420.40">
    <property type="match status" value="1"/>
</dbReference>
<dbReference type="Gene3D" id="3.40.367.20">
    <property type="match status" value="1"/>
</dbReference>
<dbReference type="HAMAP" id="MF_00524">
    <property type="entry name" value="Glucokinase"/>
    <property type="match status" value="1"/>
</dbReference>
<dbReference type="InterPro" id="IPR043129">
    <property type="entry name" value="ATPase_NBD"/>
</dbReference>
<dbReference type="InterPro" id="IPR050201">
    <property type="entry name" value="Bacterial_glucokinase"/>
</dbReference>
<dbReference type="InterPro" id="IPR003836">
    <property type="entry name" value="Glucokinase"/>
</dbReference>
<dbReference type="NCBIfam" id="TIGR00749">
    <property type="entry name" value="glk"/>
    <property type="match status" value="1"/>
</dbReference>
<dbReference type="NCBIfam" id="NF009073">
    <property type="entry name" value="PRK12408.1"/>
    <property type="match status" value="1"/>
</dbReference>
<dbReference type="PANTHER" id="PTHR47690">
    <property type="entry name" value="GLUCOKINASE"/>
    <property type="match status" value="1"/>
</dbReference>
<dbReference type="PANTHER" id="PTHR47690:SF1">
    <property type="entry name" value="GLUCOKINASE"/>
    <property type="match status" value="1"/>
</dbReference>
<dbReference type="Pfam" id="PF02685">
    <property type="entry name" value="Glucokinase"/>
    <property type="match status" value="1"/>
</dbReference>
<dbReference type="SUPFAM" id="SSF53067">
    <property type="entry name" value="Actin-like ATPase domain"/>
    <property type="match status" value="1"/>
</dbReference>
<evidence type="ECO:0000255" key="1">
    <source>
        <dbReference type="HAMAP-Rule" id="MF_00524"/>
    </source>
</evidence>
<gene>
    <name evidence="1" type="primary">glk</name>
    <name type="ordered locus">amb2112</name>
</gene>
<accession>Q2W5F9</accession>
<feature type="chain" id="PRO_0000268776" description="Glucokinase">
    <location>
        <begin position="1"/>
        <end position="321"/>
    </location>
</feature>
<feature type="binding site" evidence="1">
    <location>
        <begin position="8"/>
        <end position="13"/>
    </location>
    <ligand>
        <name>ATP</name>
        <dbReference type="ChEBI" id="CHEBI:30616"/>
    </ligand>
</feature>